<name>COAX_THEFY</name>
<proteinExistence type="inferred from homology"/>
<keyword id="KW-0067">ATP-binding</keyword>
<keyword id="KW-0173">Coenzyme A biosynthesis</keyword>
<keyword id="KW-0963">Cytoplasm</keyword>
<keyword id="KW-0418">Kinase</keyword>
<keyword id="KW-0479">Metal-binding</keyword>
<keyword id="KW-0547">Nucleotide-binding</keyword>
<keyword id="KW-0630">Potassium</keyword>
<keyword id="KW-0808">Transferase</keyword>
<comment type="function">
    <text evidence="1">Catalyzes the phosphorylation of pantothenate (Pan), the first step in CoA biosynthesis.</text>
</comment>
<comment type="catalytic activity">
    <reaction evidence="1">
        <text>(R)-pantothenate + ATP = (R)-4'-phosphopantothenate + ADP + H(+)</text>
        <dbReference type="Rhea" id="RHEA:16373"/>
        <dbReference type="ChEBI" id="CHEBI:10986"/>
        <dbReference type="ChEBI" id="CHEBI:15378"/>
        <dbReference type="ChEBI" id="CHEBI:29032"/>
        <dbReference type="ChEBI" id="CHEBI:30616"/>
        <dbReference type="ChEBI" id="CHEBI:456216"/>
        <dbReference type="EC" id="2.7.1.33"/>
    </reaction>
</comment>
<comment type="cofactor">
    <cofactor evidence="1">
        <name>NH4(+)</name>
        <dbReference type="ChEBI" id="CHEBI:28938"/>
    </cofactor>
    <cofactor evidence="1">
        <name>K(+)</name>
        <dbReference type="ChEBI" id="CHEBI:29103"/>
    </cofactor>
    <text evidence="1">A monovalent cation. Ammonium or potassium.</text>
</comment>
<comment type="pathway">
    <text evidence="1">Cofactor biosynthesis; coenzyme A biosynthesis; CoA from (R)-pantothenate: step 1/5.</text>
</comment>
<comment type="subunit">
    <text evidence="1">Homodimer.</text>
</comment>
<comment type="subcellular location">
    <subcellularLocation>
        <location evidence="1">Cytoplasm</location>
    </subcellularLocation>
</comment>
<comment type="similarity">
    <text evidence="1">Belongs to the type III pantothenate kinase family.</text>
</comment>
<organism>
    <name type="scientific">Thermobifida fusca (strain YX)</name>
    <dbReference type="NCBI Taxonomy" id="269800"/>
    <lineage>
        <taxon>Bacteria</taxon>
        <taxon>Bacillati</taxon>
        <taxon>Actinomycetota</taxon>
        <taxon>Actinomycetes</taxon>
        <taxon>Streptosporangiales</taxon>
        <taxon>Nocardiopsidaceae</taxon>
        <taxon>Thermobifida</taxon>
    </lineage>
</organism>
<accession>Q47KV7</accession>
<evidence type="ECO:0000255" key="1">
    <source>
        <dbReference type="HAMAP-Rule" id="MF_01274"/>
    </source>
</evidence>
<dbReference type="EC" id="2.7.1.33" evidence="1"/>
<dbReference type="EMBL" id="CP000088">
    <property type="protein sequence ID" value="AAZ56915.1"/>
    <property type="molecule type" value="Genomic_DNA"/>
</dbReference>
<dbReference type="RefSeq" id="WP_011293305.1">
    <property type="nucleotide sequence ID" value="NC_007333.1"/>
</dbReference>
<dbReference type="SMR" id="Q47KV7"/>
<dbReference type="STRING" id="269800.Tfu_2882"/>
<dbReference type="KEGG" id="tfu:Tfu_2882"/>
<dbReference type="eggNOG" id="COG1521">
    <property type="taxonomic scope" value="Bacteria"/>
</dbReference>
<dbReference type="HOGENOM" id="CLU_066627_1_0_11"/>
<dbReference type="OrthoDB" id="9804707at2"/>
<dbReference type="UniPathway" id="UPA00241">
    <property type="reaction ID" value="UER00352"/>
</dbReference>
<dbReference type="GO" id="GO:0005737">
    <property type="term" value="C:cytoplasm"/>
    <property type="evidence" value="ECO:0007669"/>
    <property type="project" value="UniProtKB-SubCell"/>
</dbReference>
<dbReference type="GO" id="GO:0005524">
    <property type="term" value="F:ATP binding"/>
    <property type="evidence" value="ECO:0007669"/>
    <property type="project" value="UniProtKB-UniRule"/>
</dbReference>
<dbReference type="GO" id="GO:0046872">
    <property type="term" value="F:metal ion binding"/>
    <property type="evidence" value="ECO:0007669"/>
    <property type="project" value="UniProtKB-KW"/>
</dbReference>
<dbReference type="GO" id="GO:0004594">
    <property type="term" value="F:pantothenate kinase activity"/>
    <property type="evidence" value="ECO:0007669"/>
    <property type="project" value="UniProtKB-UniRule"/>
</dbReference>
<dbReference type="GO" id="GO:0015937">
    <property type="term" value="P:coenzyme A biosynthetic process"/>
    <property type="evidence" value="ECO:0007669"/>
    <property type="project" value="UniProtKB-UniRule"/>
</dbReference>
<dbReference type="CDD" id="cd24015">
    <property type="entry name" value="ASKHA_NBD_PanK-III"/>
    <property type="match status" value="1"/>
</dbReference>
<dbReference type="Gene3D" id="3.30.420.40">
    <property type="match status" value="2"/>
</dbReference>
<dbReference type="HAMAP" id="MF_01274">
    <property type="entry name" value="Pantothen_kinase_3"/>
    <property type="match status" value="1"/>
</dbReference>
<dbReference type="InterPro" id="IPR043129">
    <property type="entry name" value="ATPase_NBD"/>
</dbReference>
<dbReference type="InterPro" id="IPR004619">
    <property type="entry name" value="Type_III_PanK"/>
</dbReference>
<dbReference type="NCBIfam" id="TIGR00671">
    <property type="entry name" value="baf"/>
    <property type="match status" value="1"/>
</dbReference>
<dbReference type="NCBIfam" id="NF009845">
    <property type="entry name" value="PRK13318.1-3"/>
    <property type="match status" value="1"/>
</dbReference>
<dbReference type="NCBIfam" id="NF009855">
    <property type="entry name" value="PRK13321.1"/>
    <property type="match status" value="1"/>
</dbReference>
<dbReference type="PANTHER" id="PTHR34265">
    <property type="entry name" value="TYPE III PANTOTHENATE KINASE"/>
    <property type="match status" value="1"/>
</dbReference>
<dbReference type="PANTHER" id="PTHR34265:SF1">
    <property type="entry name" value="TYPE III PANTOTHENATE KINASE"/>
    <property type="match status" value="1"/>
</dbReference>
<dbReference type="Pfam" id="PF03309">
    <property type="entry name" value="Pan_kinase"/>
    <property type="match status" value="1"/>
</dbReference>
<dbReference type="SUPFAM" id="SSF53067">
    <property type="entry name" value="Actin-like ATPase domain"/>
    <property type="match status" value="2"/>
</dbReference>
<gene>
    <name evidence="1" type="primary">coaX</name>
    <name type="ordered locus">Tfu_2882</name>
</gene>
<feature type="chain" id="PRO_0000267597" description="Type III pantothenate kinase">
    <location>
        <begin position="1"/>
        <end position="258"/>
    </location>
</feature>
<feature type="active site" description="Proton acceptor" evidence="1">
    <location>
        <position position="110"/>
    </location>
</feature>
<feature type="binding site" evidence="1">
    <location>
        <begin position="6"/>
        <end position="13"/>
    </location>
    <ligand>
        <name>ATP</name>
        <dbReference type="ChEBI" id="CHEBI:30616"/>
    </ligand>
</feature>
<feature type="binding site" evidence="1">
    <location>
        <begin position="108"/>
        <end position="111"/>
    </location>
    <ligand>
        <name>substrate</name>
    </ligand>
</feature>
<feature type="binding site" evidence="1">
    <location>
        <position position="130"/>
    </location>
    <ligand>
        <name>K(+)</name>
        <dbReference type="ChEBI" id="CHEBI:29103"/>
    </ligand>
</feature>
<feature type="binding site" evidence="1">
    <location>
        <position position="133"/>
    </location>
    <ligand>
        <name>ATP</name>
        <dbReference type="ChEBI" id="CHEBI:30616"/>
    </ligand>
</feature>
<feature type="binding site" evidence="1">
    <location>
        <position position="185"/>
    </location>
    <ligand>
        <name>substrate</name>
    </ligand>
</feature>
<protein>
    <recommendedName>
        <fullName evidence="1">Type III pantothenate kinase</fullName>
        <ecNumber evidence="1">2.7.1.33</ecNumber>
    </recommendedName>
    <alternativeName>
        <fullName evidence="1">PanK-III</fullName>
    </alternativeName>
    <alternativeName>
        <fullName evidence="1">Pantothenic acid kinase</fullName>
    </alternativeName>
</protein>
<reference key="1">
    <citation type="journal article" date="2007" name="J. Bacteriol.">
        <title>Genome sequence and analysis of the soil cellulolytic actinomycete Thermobifida fusca YX.</title>
        <authorList>
            <person name="Lykidis A."/>
            <person name="Mavromatis K."/>
            <person name="Ivanova N."/>
            <person name="Anderson I."/>
            <person name="Land M."/>
            <person name="DiBartolo G."/>
            <person name="Martinez M."/>
            <person name="Lapidus A."/>
            <person name="Lucas S."/>
            <person name="Copeland A."/>
            <person name="Richardson P."/>
            <person name="Wilson D.B."/>
            <person name="Kyrpides N."/>
        </authorList>
    </citation>
    <scope>NUCLEOTIDE SEQUENCE [LARGE SCALE GENOMIC DNA]</scope>
    <source>
        <strain>YX</strain>
    </source>
</reference>
<sequence>MLLTIDVGNSDTVFGLFEGEDLLEHWRVSSKGRRTADEWAVVVQNLLHFDSLIHGDIDGIAMCCTVPMVQNEMRQMFRRHYGDVPAVIVEPGVKTGVPIRMDNPKEVGSDRIVNALAAARLYGGPAVVVDFGTATTFDAVSARGEYVGGAIAPGIDISVEALSKRGAQLHMVEIIKPRSVIAKNTTEALRSGIVYGFAGQVDGIVDRMAQELTDDVDDVTVVATGGLAPLVVDECETVDVHEPWLTLIGLRMIFERNT</sequence>